<protein>
    <recommendedName>
        <fullName evidence="1">Leucyl/phenylalanyl-tRNA--protein transferase</fullName>
        <ecNumber evidence="1">2.3.2.6</ecNumber>
    </recommendedName>
    <alternativeName>
        <fullName evidence="1">L/F-transferase</fullName>
    </alternativeName>
    <alternativeName>
        <fullName evidence="1">Leucyltransferase</fullName>
    </alternativeName>
    <alternativeName>
        <fullName evidence="1">Phenyalanyltransferase</fullName>
    </alternativeName>
</protein>
<dbReference type="EC" id="2.3.2.6" evidence="1"/>
<dbReference type="EMBL" id="AE003849">
    <property type="protein sequence ID" value="AAF84255.1"/>
    <property type="molecule type" value="Genomic_DNA"/>
</dbReference>
<dbReference type="PIR" id="D82681">
    <property type="entry name" value="D82681"/>
</dbReference>
<dbReference type="RefSeq" id="WP_010893947.1">
    <property type="nucleotide sequence ID" value="NC_002488.3"/>
</dbReference>
<dbReference type="SMR" id="Q9PDD3"/>
<dbReference type="STRING" id="160492.XF_1446"/>
<dbReference type="KEGG" id="xfa:XF_1446"/>
<dbReference type="eggNOG" id="COG2360">
    <property type="taxonomic scope" value="Bacteria"/>
</dbReference>
<dbReference type="HOGENOM" id="CLU_075045_0_0_6"/>
<dbReference type="Proteomes" id="UP000000812">
    <property type="component" value="Chromosome"/>
</dbReference>
<dbReference type="GO" id="GO:0005737">
    <property type="term" value="C:cytoplasm"/>
    <property type="evidence" value="ECO:0007669"/>
    <property type="project" value="UniProtKB-SubCell"/>
</dbReference>
<dbReference type="GO" id="GO:0008914">
    <property type="term" value="F:leucyl-tRNA--protein transferase activity"/>
    <property type="evidence" value="ECO:0007669"/>
    <property type="project" value="UniProtKB-UniRule"/>
</dbReference>
<dbReference type="GO" id="GO:0030163">
    <property type="term" value="P:protein catabolic process"/>
    <property type="evidence" value="ECO:0007669"/>
    <property type="project" value="UniProtKB-UniRule"/>
</dbReference>
<dbReference type="FunFam" id="3.30.70.3550:FF:000001">
    <property type="entry name" value="Leucyl/phenylalanyl-tRNA--protein transferase"/>
    <property type="match status" value="1"/>
</dbReference>
<dbReference type="Gene3D" id="3.40.630.70">
    <property type="entry name" value="Leucyl/phenylalanyl-tRNA-protein transferase, C-terminal domain"/>
    <property type="match status" value="1"/>
</dbReference>
<dbReference type="Gene3D" id="3.30.70.3550">
    <property type="entry name" value="Leucyl/phenylalanyl-tRNA-protein transferase, N-terminal domain"/>
    <property type="match status" value="1"/>
</dbReference>
<dbReference type="HAMAP" id="MF_00688">
    <property type="entry name" value="Leu_Phe_trans"/>
    <property type="match status" value="1"/>
</dbReference>
<dbReference type="InterPro" id="IPR016181">
    <property type="entry name" value="Acyl_CoA_acyltransferase"/>
</dbReference>
<dbReference type="InterPro" id="IPR004616">
    <property type="entry name" value="Leu/Phe-tRNA_Trfase"/>
</dbReference>
<dbReference type="InterPro" id="IPR042203">
    <property type="entry name" value="Leu/Phe-tRNA_Trfase_C"/>
</dbReference>
<dbReference type="InterPro" id="IPR042221">
    <property type="entry name" value="Leu/Phe-tRNA_Trfase_N"/>
</dbReference>
<dbReference type="NCBIfam" id="TIGR00667">
    <property type="entry name" value="aat"/>
    <property type="match status" value="1"/>
</dbReference>
<dbReference type="PANTHER" id="PTHR30098">
    <property type="entry name" value="LEUCYL/PHENYLALANYL-TRNA--PROTEIN TRANSFERASE"/>
    <property type="match status" value="1"/>
</dbReference>
<dbReference type="PANTHER" id="PTHR30098:SF2">
    <property type="entry name" value="LEUCYL_PHENYLALANYL-TRNA--PROTEIN TRANSFERASE"/>
    <property type="match status" value="1"/>
</dbReference>
<dbReference type="Pfam" id="PF03588">
    <property type="entry name" value="Leu_Phe_trans"/>
    <property type="match status" value="1"/>
</dbReference>
<dbReference type="SUPFAM" id="SSF55729">
    <property type="entry name" value="Acyl-CoA N-acyltransferases (Nat)"/>
    <property type="match status" value="1"/>
</dbReference>
<keyword id="KW-0012">Acyltransferase</keyword>
<keyword id="KW-0963">Cytoplasm</keyword>
<keyword id="KW-0808">Transferase</keyword>
<gene>
    <name evidence="1" type="primary">aat</name>
    <name type="ordered locus">XF_1446</name>
</gene>
<sequence length="243" mass="27364">MHSPPYLLSPAPNTPFPPAEYALREPNGLLAIGGDLTPQRLLAAYRNGIFPWFTEGQPPLWWSPDPRTVFRSDSIHLSRRFRRNLRTSTWTVRADTMFAAVIDACASTPRRGQDGTWITANMREAYLTLHQHSYAHSVEVFDGTMLVGGIYGVALGRMFFGESMFSTRNGASKIALASLAHFLHTHSAPLIDAQVENQHLLNLGAERWPRKDFLAYVRRLITQTDLPACWSVLFGEQLSRELV</sequence>
<proteinExistence type="inferred from homology"/>
<feature type="chain" id="PRO_0000207252" description="Leucyl/phenylalanyl-tRNA--protein transferase">
    <location>
        <begin position="1"/>
        <end position="243"/>
    </location>
</feature>
<accession>Q9PDD3</accession>
<reference key="1">
    <citation type="journal article" date="2000" name="Nature">
        <title>The genome sequence of the plant pathogen Xylella fastidiosa.</title>
        <authorList>
            <person name="Simpson A.J.G."/>
            <person name="Reinach F.C."/>
            <person name="Arruda P."/>
            <person name="Abreu F.A."/>
            <person name="Acencio M."/>
            <person name="Alvarenga R."/>
            <person name="Alves L.M.C."/>
            <person name="Araya J.E."/>
            <person name="Baia G.S."/>
            <person name="Baptista C.S."/>
            <person name="Barros M.H."/>
            <person name="Bonaccorsi E.D."/>
            <person name="Bordin S."/>
            <person name="Bove J.M."/>
            <person name="Briones M.R.S."/>
            <person name="Bueno M.R.P."/>
            <person name="Camargo A.A."/>
            <person name="Camargo L.E.A."/>
            <person name="Carraro D.M."/>
            <person name="Carrer H."/>
            <person name="Colauto N.B."/>
            <person name="Colombo C."/>
            <person name="Costa F.F."/>
            <person name="Costa M.C.R."/>
            <person name="Costa-Neto C.M."/>
            <person name="Coutinho L.L."/>
            <person name="Cristofani M."/>
            <person name="Dias-Neto E."/>
            <person name="Docena C."/>
            <person name="El-Dorry H."/>
            <person name="Facincani A.P."/>
            <person name="Ferreira A.J.S."/>
            <person name="Ferreira V.C.A."/>
            <person name="Ferro J.A."/>
            <person name="Fraga J.S."/>
            <person name="Franca S.C."/>
            <person name="Franco M.C."/>
            <person name="Frohme M."/>
            <person name="Furlan L.R."/>
            <person name="Garnier M."/>
            <person name="Goldman G.H."/>
            <person name="Goldman M.H.S."/>
            <person name="Gomes S.L."/>
            <person name="Gruber A."/>
            <person name="Ho P.L."/>
            <person name="Hoheisel J.D."/>
            <person name="Junqueira M.L."/>
            <person name="Kemper E.L."/>
            <person name="Kitajima J.P."/>
            <person name="Krieger J.E."/>
            <person name="Kuramae E.E."/>
            <person name="Laigret F."/>
            <person name="Lambais M.R."/>
            <person name="Leite L.C.C."/>
            <person name="Lemos E.G.M."/>
            <person name="Lemos M.V.F."/>
            <person name="Lopes S.A."/>
            <person name="Lopes C.R."/>
            <person name="Machado J.A."/>
            <person name="Machado M.A."/>
            <person name="Madeira A.M.B.N."/>
            <person name="Madeira H.M.F."/>
            <person name="Marino C.L."/>
            <person name="Marques M.V."/>
            <person name="Martins E.A.L."/>
            <person name="Martins E.M.F."/>
            <person name="Matsukuma A.Y."/>
            <person name="Menck C.F.M."/>
            <person name="Miracca E.C."/>
            <person name="Miyaki C.Y."/>
            <person name="Monteiro-Vitorello C.B."/>
            <person name="Moon D.H."/>
            <person name="Nagai M.A."/>
            <person name="Nascimento A.L.T.O."/>
            <person name="Netto L.E.S."/>
            <person name="Nhani A. Jr."/>
            <person name="Nobrega F.G."/>
            <person name="Nunes L.R."/>
            <person name="Oliveira M.A."/>
            <person name="de Oliveira M.C."/>
            <person name="de Oliveira R.C."/>
            <person name="Palmieri D.A."/>
            <person name="Paris A."/>
            <person name="Peixoto B.R."/>
            <person name="Pereira G.A.G."/>
            <person name="Pereira H.A. Jr."/>
            <person name="Pesquero J.B."/>
            <person name="Quaggio R.B."/>
            <person name="Roberto P.G."/>
            <person name="Rodrigues V."/>
            <person name="de Rosa A.J.M."/>
            <person name="de Rosa V.E. Jr."/>
            <person name="de Sa R.G."/>
            <person name="Santelli R.V."/>
            <person name="Sawasaki H.E."/>
            <person name="da Silva A.C.R."/>
            <person name="da Silva A.M."/>
            <person name="da Silva F.R."/>
            <person name="Silva W.A. Jr."/>
            <person name="da Silveira J.F."/>
            <person name="Silvestri M.L.Z."/>
            <person name="Siqueira W.J."/>
            <person name="de Souza A.A."/>
            <person name="de Souza A.P."/>
            <person name="Terenzi M.F."/>
            <person name="Truffi D."/>
            <person name="Tsai S.M."/>
            <person name="Tsuhako M.H."/>
            <person name="Vallada H."/>
            <person name="Van Sluys M.A."/>
            <person name="Verjovski-Almeida S."/>
            <person name="Vettore A.L."/>
            <person name="Zago M.A."/>
            <person name="Zatz M."/>
            <person name="Meidanis J."/>
            <person name="Setubal J.C."/>
        </authorList>
    </citation>
    <scope>NUCLEOTIDE SEQUENCE [LARGE SCALE GENOMIC DNA]</scope>
    <source>
        <strain>9a5c</strain>
    </source>
</reference>
<evidence type="ECO:0000255" key="1">
    <source>
        <dbReference type="HAMAP-Rule" id="MF_00688"/>
    </source>
</evidence>
<organism>
    <name type="scientific">Xylella fastidiosa (strain 9a5c)</name>
    <dbReference type="NCBI Taxonomy" id="160492"/>
    <lineage>
        <taxon>Bacteria</taxon>
        <taxon>Pseudomonadati</taxon>
        <taxon>Pseudomonadota</taxon>
        <taxon>Gammaproteobacteria</taxon>
        <taxon>Lysobacterales</taxon>
        <taxon>Lysobacteraceae</taxon>
        <taxon>Xylella</taxon>
    </lineage>
</organism>
<comment type="function">
    <text evidence="1">Functions in the N-end rule pathway of protein degradation where it conjugates Leu, Phe and, less efficiently, Met from aminoacyl-tRNAs to the N-termini of proteins containing an N-terminal arginine or lysine.</text>
</comment>
<comment type="catalytic activity">
    <reaction evidence="1">
        <text>N-terminal L-lysyl-[protein] + L-leucyl-tRNA(Leu) = N-terminal L-leucyl-L-lysyl-[protein] + tRNA(Leu) + H(+)</text>
        <dbReference type="Rhea" id="RHEA:12340"/>
        <dbReference type="Rhea" id="RHEA-COMP:9613"/>
        <dbReference type="Rhea" id="RHEA-COMP:9622"/>
        <dbReference type="Rhea" id="RHEA-COMP:12670"/>
        <dbReference type="Rhea" id="RHEA-COMP:12671"/>
        <dbReference type="ChEBI" id="CHEBI:15378"/>
        <dbReference type="ChEBI" id="CHEBI:65249"/>
        <dbReference type="ChEBI" id="CHEBI:78442"/>
        <dbReference type="ChEBI" id="CHEBI:78494"/>
        <dbReference type="ChEBI" id="CHEBI:133043"/>
        <dbReference type="EC" id="2.3.2.6"/>
    </reaction>
</comment>
<comment type="catalytic activity">
    <reaction evidence="1">
        <text>N-terminal L-arginyl-[protein] + L-leucyl-tRNA(Leu) = N-terminal L-leucyl-L-arginyl-[protein] + tRNA(Leu) + H(+)</text>
        <dbReference type="Rhea" id="RHEA:50416"/>
        <dbReference type="Rhea" id="RHEA-COMP:9613"/>
        <dbReference type="Rhea" id="RHEA-COMP:9622"/>
        <dbReference type="Rhea" id="RHEA-COMP:12672"/>
        <dbReference type="Rhea" id="RHEA-COMP:12673"/>
        <dbReference type="ChEBI" id="CHEBI:15378"/>
        <dbReference type="ChEBI" id="CHEBI:64719"/>
        <dbReference type="ChEBI" id="CHEBI:78442"/>
        <dbReference type="ChEBI" id="CHEBI:78494"/>
        <dbReference type="ChEBI" id="CHEBI:133044"/>
        <dbReference type="EC" id="2.3.2.6"/>
    </reaction>
</comment>
<comment type="catalytic activity">
    <reaction evidence="1">
        <text>L-phenylalanyl-tRNA(Phe) + an N-terminal L-alpha-aminoacyl-[protein] = an N-terminal L-phenylalanyl-L-alpha-aminoacyl-[protein] + tRNA(Phe)</text>
        <dbReference type="Rhea" id="RHEA:43632"/>
        <dbReference type="Rhea" id="RHEA-COMP:9668"/>
        <dbReference type="Rhea" id="RHEA-COMP:9699"/>
        <dbReference type="Rhea" id="RHEA-COMP:10636"/>
        <dbReference type="Rhea" id="RHEA-COMP:10637"/>
        <dbReference type="ChEBI" id="CHEBI:78442"/>
        <dbReference type="ChEBI" id="CHEBI:78531"/>
        <dbReference type="ChEBI" id="CHEBI:78597"/>
        <dbReference type="ChEBI" id="CHEBI:83561"/>
        <dbReference type="EC" id="2.3.2.6"/>
    </reaction>
</comment>
<comment type="subcellular location">
    <subcellularLocation>
        <location evidence="1">Cytoplasm</location>
    </subcellularLocation>
</comment>
<comment type="similarity">
    <text evidence="1">Belongs to the L/F-transferase family.</text>
</comment>
<name>LFTR_XYLFA</name>